<protein>
    <recommendedName>
        <fullName>Membrane cofactor protein</fullName>
    </recommendedName>
    <cdAntigenName>CD46</cdAntigenName>
</protein>
<keyword id="KW-0002">3D-structure</keyword>
<keyword id="KW-0025">Alternative splicing</keyword>
<keyword id="KW-0180">Complement pathway</keyword>
<keyword id="KW-0968">Cytoplasmic vesicle</keyword>
<keyword id="KW-0903">Direct protein sequencing</keyword>
<keyword id="KW-1015">Disulfide bond</keyword>
<keyword id="KW-0278">Fertilization</keyword>
<keyword id="KW-0325">Glycoprotein</keyword>
<keyword id="KW-0391">Immunity</keyword>
<keyword id="KW-0399">Innate immunity</keyword>
<keyword id="KW-0472">Membrane</keyword>
<keyword id="KW-0597">Phosphoprotein</keyword>
<keyword id="KW-1185">Reference proteome</keyword>
<keyword id="KW-0677">Repeat</keyword>
<keyword id="KW-0732">Signal</keyword>
<keyword id="KW-0768">Sushi</keyword>
<keyword id="KW-0812">Transmembrane</keyword>
<keyword id="KW-1133">Transmembrane helix</keyword>
<comment type="function">
    <text evidence="1">Acts as a cofactor for complement factor I, a serine protease which protects autologous cells against complement-mediated injury by cleaving C3b and C4b deposited on host tissue. May be involved in the fusion of the spermatozoa with the oocyte during fertilization. May act as a costimulatory factor for T-cells which induces the differentiation of CD4+ into T-regulatory 1 cells. T-regulatory 1 cells suppress immune responses by secreting interleukin-10, and therefore are thought to prevent autoimmunity (By similarity). In case of bovine viral diarrhea virus (BVDV) infection, involved in virus attachment to cells.</text>
</comment>
<comment type="subunit">
    <text evidence="2">Interacts with C3b. Interacts with C4b. Interacts with moesin/MSN.</text>
</comment>
<comment type="subcellular location">
    <subcellularLocation>
        <location evidence="1">Cytoplasmic vesicle</location>
        <location evidence="1">Secretory vesicle</location>
        <location evidence="1">Acrosome inner membrane</location>
        <topology evidence="1">Single-pass type I membrane protein</topology>
    </subcellularLocation>
    <text evidence="1">Inner acrosomal membrane of spermatozoa.</text>
</comment>
<comment type="alternative products">
    <event type="alternative splicing"/>
    <isoform>
        <id>Q6VE48-1</id>
        <name>1</name>
        <sequence type="displayed"/>
    </isoform>
    <isoform>
        <id>Q6VE48-2</id>
        <name>2</name>
        <sequence type="described" ref="VSP_019033"/>
    </isoform>
    <isoform>
        <id>Q6VE48-3</id>
        <name>3</name>
        <sequence type="described" ref="VSP_019034"/>
    </isoform>
</comment>
<comment type="tissue specificity">
    <text evidence="5 6">Highly expressed at the blood-brain barrier. Broadly expressed, with highest levels in thymus and spleen (at protein level).</text>
</comment>
<comment type="domain">
    <text evidence="1">Sushi domains 3 and 4 are the most important for interaction with C3b and C4b.</text>
</comment>
<comment type="PTM">
    <text evidence="6">N-glycosylated.</text>
</comment>
<feature type="signal peptide" evidence="3">
    <location>
        <begin position="1"/>
        <end position="42"/>
    </location>
</feature>
<feature type="chain" id="PRO_0000238968" description="Membrane cofactor protein">
    <location>
        <begin position="43"/>
        <end position="361"/>
    </location>
</feature>
<feature type="topological domain" description="Extracellular" evidence="3">
    <location>
        <begin position="43"/>
        <end position="311"/>
    </location>
</feature>
<feature type="transmembrane region" description="Helical" evidence="3">
    <location>
        <begin position="312"/>
        <end position="332"/>
    </location>
</feature>
<feature type="topological domain" description="Cytoplasmic" evidence="3">
    <location>
        <begin position="333"/>
        <end position="361"/>
    </location>
</feature>
<feature type="domain" description="Sushi 1" evidence="4">
    <location>
        <begin position="43"/>
        <end position="104"/>
    </location>
</feature>
<feature type="domain" description="Sushi 2" evidence="4">
    <location>
        <begin position="105"/>
        <end position="168"/>
    </location>
</feature>
<feature type="domain" description="Sushi 3" evidence="4">
    <location>
        <begin position="169"/>
        <end position="234"/>
    </location>
</feature>
<feature type="domain" description="Sushi 4" evidence="4">
    <location>
        <begin position="235"/>
        <end position="294"/>
    </location>
</feature>
<feature type="glycosylation site" description="N-linked (GlcNAc...) asparagine" evidence="3">
    <location>
        <position position="122"/>
    </location>
</feature>
<feature type="glycosylation site" description="N-linked (GlcNAc...) asparagine" evidence="3">
    <location>
        <position position="145"/>
    </location>
</feature>
<feature type="glycosylation site" description="O-linked (GalNAc...) threonine" evidence="3">
    <location>
        <position position="301"/>
    </location>
</feature>
<feature type="disulfide bond" evidence="4">
    <location>
        <begin position="107"/>
        <end position="149"/>
    </location>
</feature>
<feature type="disulfide bond" evidence="4">
    <location>
        <begin position="135"/>
        <end position="166"/>
    </location>
</feature>
<feature type="disulfide bond" evidence="4">
    <location>
        <begin position="171"/>
        <end position="219"/>
    </location>
</feature>
<feature type="disulfide bond" evidence="4">
    <location>
        <begin position="200"/>
        <end position="232"/>
    </location>
</feature>
<feature type="disulfide bond" evidence="4">
    <location>
        <begin position="237"/>
        <end position="279"/>
    </location>
</feature>
<feature type="disulfide bond" evidence="4">
    <location>
        <begin position="265"/>
        <end position="292"/>
    </location>
</feature>
<feature type="splice variant" id="VSP_019033" description="In isoform 2." evidence="7 8">
    <original>VLIGVGLLLCLYCCFCRQRKKGIYVTGESHRQDILFSL</original>
    <variation>LLALDYCSACTAVFADRGRKGKQNVALRTPLIRIKQPLQQNR</variation>
    <location>
        <begin position="324"/>
        <end position="361"/>
    </location>
</feature>
<feature type="splice variant" id="VSP_019034" description="In isoform 3." evidence="8">
    <original>IYVTGESHRQDILFSL</original>
    <variation>KAECSATYTTYQDKATTATEQMN</variation>
    <location>
        <begin position="346"/>
        <end position="361"/>
    </location>
</feature>
<feature type="sequence conflict" description="In Ref. 1; AAP92712." evidence="9" ref="1">
    <original>R</original>
    <variation>L</variation>
    <location>
        <position position="23"/>
    </location>
</feature>
<feature type="sequence conflict" description="In Ref. 1; AAP92712." evidence="9" ref="1">
    <original>S</original>
    <variation>C</variation>
    <location>
        <position position="39"/>
    </location>
</feature>
<feature type="sequence conflict" description="In Ref. 1; AAP92712." evidence="9" ref="1">
    <original>H</original>
    <variation>R</variation>
    <location>
        <position position="73"/>
    </location>
</feature>
<feature type="sequence conflict" description="In Ref. 1; AAP92712." evidence="9" ref="1">
    <original>KRRCPT</original>
    <variation>RRQCPN</variation>
    <location>
        <begin position="104"/>
        <end position="109"/>
    </location>
</feature>
<feature type="sequence conflict" description="In Ref. 2; AAR04015." evidence="9" ref="2">
    <original>S</original>
    <variation>N</variation>
    <location>
        <position position="124"/>
    </location>
</feature>
<feature type="sequence conflict" description="In Ref. 2; AAR04015." evidence="9" ref="2">
    <original>S</original>
    <variation>N</variation>
    <location>
        <position position="185"/>
    </location>
</feature>
<feature type="sequence conflict" description="In Ref. 1; AAP92712." evidence="9" ref="1">
    <original>Q</original>
    <variation>K</variation>
    <location>
        <position position="228"/>
    </location>
</feature>
<feature type="sequence conflict" description="In Ref. 1; AAP92712." evidence="9" ref="1">
    <original>H</original>
    <variation>Y</variation>
    <location>
        <position position="244"/>
    </location>
</feature>
<feature type="sequence conflict" description="In Ref. 1; AAP92712." evidence="9" ref="1">
    <original>Y</original>
    <variation>Q</variation>
    <location>
        <position position="272"/>
    </location>
</feature>
<feature type="strand" evidence="10">
    <location>
        <begin position="50"/>
        <end position="56"/>
    </location>
</feature>
<feature type="strand" evidence="10">
    <location>
        <begin position="67"/>
        <end position="72"/>
    </location>
</feature>
<feature type="strand" evidence="10">
    <location>
        <begin position="76"/>
        <end position="80"/>
    </location>
</feature>
<feature type="strand" evidence="10">
    <location>
        <begin position="85"/>
        <end position="89"/>
    </location>
</feature>
<feature type="strand" evidence="11">
    <location>
        <begin position="93"/>
        <end position="95"/>
    </location>
</feature>
<feature type="strand" evidence="10">
    <location>
        <begin position="102"/>
        <end position="104"/>
    </location>
</feature>
<feature type="strand" evidence="10">
    <location>
        <begin position="116"/>
        <end position="119"/>
    </location>
</feature>
<feature type="strand" evidence="10">
    <location>
        <begin position="130"/>
        <end position="135"/>
    </location>
</feature>
<feature type="strand" evidence="10">
    <location>
        <begin position="139"/>
        <end position="143"/>
    </location>
</feature>
<feature type="strand" evidence="10">
    <location>
        <begin position="145"/>
        <end position="151"/>
    </location>
</feature>
<feature type="strand" evidence="10">
    <location>
        <begin position="153"/>
        <end position="155"/>
    </location>
</feature>
<feature type="strand" evidence="10">
    <location>
        <begin position="157"/>
        <end position="161"/>
    </location>
</feature>
<feature type="strand" evidence="10">
    <location>
        <begin position="165"/>
        <end position="168"/>
    </location>
</feature>
<feature type="strand" evidence="11">
    <location>
        <begin position="180"/>
        <end position="182"/>
    </location>
</feature>
<feature type="strand" evidence="11">
    <location>
        <begin position="195"/>
        <end position="200"/>
    </location>
</feature>
<feature type="strand" evidence="11">
    <location>
        <begin position="204"/>
        <end position="207"/>
    </location>
</feature>
<feature type="strand" evidence="11">
    <location>
        <begin position="215"/>
        <end position="219"/>
    </location>
</feature>
<feature type="strand" evidence="11">
    <location>
        <begin position="221"/>
        <end position="223"/>
    </location>
</feature>
<feature type="strand" evidence="11">
    <location>
        <begin position="225"/>
        <end position="227"/>
    </location>
</feature>
<feature type="strand" evidence="11">
    <location>
        <begin position="245"/>
        <end position="247"/>
    </location>
</feature>
<feature type="strand" evidence="11">
    <location>
        <begin position="253"/>
        <end position="256"/>
    </location>
</feature>
<feature type="strand" evidence="11">
    <location>
        <begin position="260"/>
        <end position="265"/>
    </location>
</feature>
<feature type="strand" evidence="11">
    <location>
        <begin position="275"/>
        <end position="279"/>
    </location>
</feature>
<feature type="strand" evidence="11">
    <location>
        <begin position="283"/>
        <end position="287"/>
    </location>
</feature>
<feature type="modified residue" description="Phosphotyrosine" evidence="9">
    <location sequence="Q6VE48-3">
        <position position="353"/>
    </location>
</feature>
<feature type="modified residue" description="Phosphotyrosine" evidence="9">
    <location sequence="Q6VE48-3">
        <position position="356"/>
    </location>
</feature>
<dbReference type="EMBL" id="AY333119">
    <property type="protein sequence ID" value="AAP92712.1"/>
    <property type="molecule type" value="mRNA"/>
</dbReference>
<dbReference type="EMBL" id="AY342429">
    <property type="protein sequence ID" value="AAR04015.1"/>
    <property type="molecule type" value="mRNA"/>
</dbReference>
<dbReference type="RefSeq" id="NP_001229493.1">
    <property type="nucleotide sequence ID" value="NM_001242564.1"/>
</dbReference>
<dbReference type="RefSeq" id="NP_898903.2">
    <property type="nucleotide sequence ID" value="NM_183080.2"/>
</dbReference>
<dbReference type="PDB" id="8CI3">
    <property type="method" value="X-ray"/>
    <property type="resolution" value="2.33 A"/>
    <property type="chains" value="A/B=40-175"/>
</dbReference>
<dbReference type="PDB" id="8CJV">
    <property type="method" value="X-ray"/>
    <property type="resolution" value="2.84 A"/>
    <property type="chains" value="A/B=43-295"/>
</dbReference>
<dbReference type="PDBsum" id="8CI3"/>
<dbReference type="PDBsum" id="8CJV"/>
<dbReference type="SMR" id="Q6VE48"/>
<dbReference type="FunCoup" id="Q6VE48">
    <property type="interactions" value="235"/>
</dbReference>
<dbReference type="IntAct" id="Q6VE48">
    <property type="interactions" value="1"/>
</dbReference>
<dbReference type="STRING" id="9913.ENSBTAP00000065225"/>
<dbReference type="GlyCosmos" id="Q6VE48">
    <property type="glycosylation" value="3 sites, No reported glycans"/>
</dbReference>
<dbReference type="GlyGen" id="Q6VE48">
    <property type="glycosylation" value="3 sites"/>
</dbReference>
<dbReference type="PaxDb" id="9913-ENSBTAP00000007107"/>
<dbReference type="PeptideAtlas" id="Q6VE48"/>
<dbReference type="GeneID" id="280851"/>
<dbReference type="KEGG" id="bta:280851"/>
<dbReference type="CTD" id="4179"/>
<dbReference type="eggNOG" id="ENOG502QPUC">
    <property type="taxonomic scope" value="Eukaryota"/>
</dbReference>
<dbReference type="InParanoid" id="Q6VE48"/>
<dbReference type="OrthoDB" id="6127264at2759"/>
<dbReference type="Proteomes" id="UP000009136">
    <property type="component" value="Unplaced"/>
</dbReference>
<dbReference type="GO" id="GO:0009986">
    <property type="term" value="C:cell surface"/>
    <property type="evidence" value="ECO:0007669"/>
    <property type="project" value="InterPro"/>
</dbReference>
<dbReference type="GO" id="GO:0005615">
    <property type="term" value="C:extracellular space"/>
    <property type="evidence" value="ECO:0000318"/>
    <property type="project" value="GO_Central"/>
</dbReference>
<dbReference type="GO" id="GO:0002079">
    <property type="term" value="C:inner acrosomal membrane"/>
    <property type="evidence" value="ECO:0007669"/>
    <property type="project" value="UniProtKB-SubCell"/>
</dbReference>
<dbReference type="GO" id="GO:0005886">
    <property type="term" value="C:plasma membrane"/>
    <property type="evidence" value="ECO:0000318"/>
    <property type="project" value="GO_Central"/>
</dbReference>
<dbReference type="GO" id="GO:0006958">
    <property type="term" value="P:complement activation, classical pathway"/>
    <property type="evidence" value="ECO:0007669"/>
    <property type="project" value="UniProtKB-KW"/>
</dbReference>
<dbReference type="GO" id="GO:0045087">
    <property type="term" value="P:innate immune response"/>
    <property type="evidence" value="ECO:0007669"/>
    <property type="project" value="UniProtKB-KW"/>
</dbReference>
<dbReference type="GO" id="GO:0045959">
    <property type="term" value="P:negative regulation of complement activation, classical pathway"/>
    <property type="evidence" value="ECO:0000318"/>
    <property type="project" value="GO_Central"/>
</dbReference>
<dbReference type="GO" id="GO:0007338">
    <property type="term" value="P:single fertilization"/>
    <property type="evidence" value="ECO:0007669"/>
    <property type="project" value="UniProtKB-KW"/>
</dbReference>
<dbReference type="GO" id="GO:0002456">
    <property type="term" value="P:T cell mediated immunity"/>
    <property type="evidence" value="ECO:0000318"/>
    <property type="project" value="GO_Central"/>
</dbReference>
<dbReference type="CDD" id="cd00033">
    <property type="entry name" value="CCP"/>
    <property type="match status" value="4"/>
</dbReference>
<dbReference type="FunFam" id="2.10.70.10:FF:000014">
    <property type="entry name" value="Membrane cofactor protein"/>
    <property type="match status" value="1"/>
</dbReference>
<dbReference type="FunFam" id="2.10.70.10:FF:000042">
    <property type="entry name" value="Membrane cofactor protein"/>
    <property type="match status" value="1"/>
</dbReference>
<dbReference type="Gene3D" id="2.10.70.10">
    <property type="entry name" value="Complement Module, domain 1"/>
    <property type="match status" value="4"/>
</dbReference>
<dbReference type="InterPro" id="IPR017341">
    <property type="entry name" value="CD46"/>
</dbReference>
<dbReference type="InterPro" id="IPR035976">
    <property type="entry name" value="Sushi/SCR/CCP_sf"/>
</dbReference>
<dbReference type="InterPro" id="IPR000436">
    <property type="entry name" value="Sushi_SCR_CCP_dom"/>
</dbReference>
<dbReference type="PANTHER" id="PTHR46393:SF7">
    <property type="entry name" value="COMPLEMENT C2"/>
    <property type="match status" value="1"/>
</dbReference>
<dbReference type="PANTHER" id="PTHR46393">
    <property type="entry name" value="SUSHI DOMAIN-CONTAINING PROTEIN"/>
    <property type="match status" value="1"/>
</dbReference>
<dbReference type="Pfam" id="PF00084">
    <property type="entry name" value="Sushi"/>
    <property type="match status" value="4"/>
</dbReference>
<dbReference type="PIRSF" id="PIRSF037971">
    <property type="entry name" value="TLX_CD46"/>
    <property type="match status" value="1"/>
</dbReference>
<dbReference type="SMART" id="SM00032">
    <property type="entry name" value="CCP"/>
    <property type="match status" value="4"/>
</dbReference>
<dbReference type="SUPFAM" id="SSF57535">
    <property type="entry name" value="Complement control module/SCR domain"/>
    <property type="match status" value="4"/>
</dbReference>
<dbReference type="PROSITE" id="PS50923">
    <property type="entry name" value="SUSHI"/>
    <property type="match status" value="4"/>
</dbReference>
<sequence length="361" mass="39391">MRASCTPLKAPLRRPERLASSGRFAWVLLLAPLLLLPTSSDACDDPPRFVSMKPQGTLKPSYSPGEQIVYECHLGFQPVTPGQVLALVCQDNNTWSSLQEGCKKRRCPTLADPTNGQVILVNGSTEFGSEVHYVCNNGYYLLGTNISYCEVSSGTGVNWSDNPPTCEKILCQPPPEIQNGKYTNSHKDVFEYNEVVTYSCDPSNGPDEYSLVGESKLTCIGNGEWSSQPPQCKVVKCVYPAIEHGTIVSGFGPKYYYKATVVLKCNEGFNLYGNSVVVCGENSTWEPELPKCIKGHPPRPTDASPPNGAEGLGAGYIVLVIVAVLIGVGLLLCLYCCFCRQRKKGIYVTGESHRQDILFSL</sequence>
<name>MCP_BOVIN</name>
<evidence type="ECO:0000250" key="1"/>
<evidence type="ECO:0000250" key="2">
    <source>
        <dbReference type="UniProtKB" id="P15529"/>
    </source>
</evidence>
<evidence type="ECO:0000255" key="3"/>
<evidence type="ECO:0000255" key="4">
    <source>
        <dbReference type="PROSITE-ProRule" id="PRU00302"/>
    </source>
</evidence>
<evidence type="ECO:0000269" key="5">
    <source>
    </source>
</evidence>
<evidence type="ECO:0000269" key="6">
    <source>
    </source>
</evidence>
<evidence type="ECO:0000303" key="7">
    <source>
    </source>
</evidence>
<evidence type="ECO:0000303" key="8">
    <source>
    </source>
</evidence>
<evidence type="ECO:0000305" key="9"/>
<evidence type="ECO:0007829" key="10">
    <source>
        <dbReference type="PDB" id="8CI3"/>
    </source>
</evidence>
<evidence type="ECO:0007829" key="11">
    <source>
        <dbReference type="PDB" id="8CJV"/>
    </source>
</evidence>
<reference key="1">
    <citation type="journal article" date="2002" name="J. Neuropathol. Exp. Neurol.">
        <title>Subtractive expression cloning reveals high expression of CD46 at the blood-brain barrier.</title>
        <authorList>
            <person name="Shusta E.V."/>
            <person name="Zhu C."/>
            <person name="Boado R.J."/>
            <person name="Pardridge W.M."/>
        </authorList>
    </citation>
    <scope>NUCLEOTIDE SEQUENCE [MRNA] (ISOFORM 2)</scope>
    <scope>TISSUE SPECIFICITY</scope>
    <source>
        <tissue>Brain endothelium</tissue>
    </source>
</reference>
<reference key="2">
    <citation type="journal article" date="2004" name="J. Virol.">
        <title>CD46 is a cellular receptor for bovine viral diarrhea virus.</title>
        <authorList>
            <person name="Maurer K."/>
            <person name="Krey T."/>
            <person name="Moennig V."/>
            <person name="Thiel H.-J."/>
            <person name="Ruemenapf T."/>
        </authorList>
    </citation>
    <scope>NUCLEOTIDE SEQUENCE [MRNA] (ISOFORMS 1; 2 AND 3)</scope>
    <scope>PROTEIN SEQUENCE OF 49-69 AND 237-254</scope>
    <scope>GLYCOSYLATION</scope>
    <scope>TISSUE SPECIFICITY</scope>
    <scope>INTERACTION WITH BOVINE VIRAL DIARRHEA VIRUS</scope>
    <source>
        <tissue>Lymph node</tissue>
    </source>
</reference>
<organism>
    <name type="scientific">Bos taurus</name>
    <name type="common">Bovine</name>
    <dbReference type="NCBI Taxonomy" id="9913"/>
    <lineage>
        <taxon>Eukaryota</taxon>
        <taxon>Metazoa</taxon>
        <taxon>Chordata</taxon>
        <taxon>Craniata</taxon>
        <taxon>Vertebrata</taxon>
        <taxon>Euteleostomi</taxon>
        <taxon>Mammalia</taxon>
        <taxon>Eutheria</taxon>
        <taxon>Laurasiatheria</taxon>
        <taxon>Artiodactyla</taxon>
        <taxon>Ruminantia</taxon>
        <taxon>Pecora</taxon>
        <taxon>Bovidae</taxon>
        <taxon>Bovinae</taxon>
        <taxon>Bos</taxon>
    </lineage>
</organism>
<accession>Q6VE48</accession>
<accession>Q7YRJ3</accession>
<proteinExistence type="evidence at protein level"/>
<gene>
    <name type="primary">CD46</name>
    <name type="synonym">MCP</name>
</gene>